<evidence type="ECO:0000255" key="1">
    <source>
        <dbReference type="HAMAP-Rule" id="MF_01456"/>
    </source>
</evidence>
<gene>
    <name evidence="1" type="primary">nuoK</name>
    <name type="ordered locus">BAbS19_I07760</name>
</gene>
<accession>B2S553</accession>
<organism>
    <name type="scientific">Brucella abortus (strain S19)</name>
    <dbReference type="NCBI Taxonomy" id="430066"/>
    <lineage>
        <taxon>Bacteria</taxon>
        <taxon>Pseudomonadati</taxon>
        <taxon>Pseudomonadota</taxon>
        <taxon>Alphaproteobacteria</taxon>
        <taxon>Hyphomicrobiales</taxon>
        <taxon>Brucellaceae</taxon>
        <taxon>Brucella/Ochrobactrum group</taxon>
        <taxon>Brucella</taxon>
    </lineage>
</organism>
<proteinExistence type="inferred from homology"/>
<sequence length="102" mass="10942">MEIGIAHYLTVSAILFTLGVFGIFLNRKNVIVILMSIELILLSVNLNFVAFSSQLGDLVGQVFALFVLTVAAAEAAIGLAILVVFFRNRGSIAVEDVNVMKG</sequence>
<reference key="1">
    <citation type="journal article" date="2008" name="PLoS ONE">
        <title>Genome sequence of Brucella abortus vaccine strain S19 compared to virulent strains yields candidate virulence genes.</title>
        <authorList>
            <person name="Crasta O.R."/>
            <person name="Folkerts O."/>
            <person name="Fei Z."/>
            <person name="Mane S.P."/>
            <person name="Evans C."/>
            <person name="Martino-Catt S."/>
            <person name="Bricker B."/>
            <person name="Yu G."/>
            <person name="Du L."/>
            <person name="Sobral B.W."/>
        </authorList>
    </citation>
    <scope>NUCLEOTIDE SEQUENCE [LARGE SCALE GENOMIC DNA]</scope>
    <source>
        <strain>S19</strain>
    </source>
</reference>
<feature type="chain" id="PRO_0000389972" description="NADH-quinone oxidoreductase subunit K">
    <location>
        <begin position="1"/>
        <end position="102"/>
    </location>
</feature>
<feature type="transmembrane region" description="Helical" evidence="1">
    <location>
        <begin position="5"/>
        <end position="25"/>
    </location>
</feature>
<feature type="transmembrane region" description="Helical" evidence="1">
    <location>
        <begin position="31"/>
        <end position="51"/>
    </location>
</feature>
<feature type="transmembrane region" description="Helical" evidence="1">
    <location>
        <begin position="66"/>
        <end position="86"/>
    </location>
</feature>
<protein>
    <recommendedName>
        <fullName evidence="1">NADH-quinone oxidoreductase subunit K</fullName>
        <ecNumber evidence="1">7.1.1.-</ecNumber>
    </recommendedName>
    <alternativeName>
        <fullName evidence="1">NADH dehydrogenase I subunit K</fullName>
    </alternativeName>
    <alternativeName>
        <fullName evidence="1">NDH-1 subunit K</fullName>
    </alternativeName>
</protein>
<comment type="function">
    <text evidence="1">NDH-1 shuttles electrons from NADH, via FMN and iron-sulfur (Fe-S) centers, to quinones in the respiratory chain. The immediate electron acceptor for the enzyme in this species is believed to be ubiquinone. Couples the redox reaction to proton translocation (for every two electrons transferred, four hydrogen ions are translocated across the cytoplasmic membrane), and thus conserves the redox energy in a proton gradient.</text>
</comment>
<comment type="catalytic activity">
    <reaction evidence="1">
        <text>a quinone + NADH + 5 H(+)(in) = a quinol + NAD(+) + 4 H(+)(out)</text>
        <dbReference type="Rhea" id="RHEA:57888"/>
        <dbReference type="ChEBI" id="CHEBI:15378"/>
        <dbReference type="ChEBI" id="CHEBI:24646"/>
        <dbReference type="ChEBI" id="CHEBI:57540"/>
        <dbReference type="ChEBI" id="CHEBI:57945"/>
        <dbReference type="ChEBI" id="CHEBI:132124"/>
    </reaction>
</comment>
<comment type="subunit">
    <text evidence="1">NDH-1 is composed of 14 different subunits. Subunits NuoA, H, J, K, L, M, N constitute the membrane sector of the complex.</text>
</comment>
<comment type="subcellular location">
    <subcellularLocation>
        <location evidence="1">Cell inner membrane</location>
        <topology evidence="1">Multi-pass membrane protein</topology>
    </subcellularLocation>
</comment>
<comment type="similarity">
    <text evidence="1">Belongs to the complex I subunit 4L family.</text>
</comment>
<name>NUOK_BRUA1</name>
<keyword id="KW-0997">Cell inner membrane</keyword>
<keyword id="KW-1003">Cell membrane</keyword>
<keyword id="KW-0472">Membrane</keyword>
<keyword id="KW-0520">NAD</keyword>
<keyword id="KW-0874">Quinone</keyword>
<keyword id="KW-1278">Translocase</keyword>
<keyword id="KW-0812">Transmembrane</keyword>
<keyword id="KW-1133">Transmembrane helix</keyword>
<keyword id="KW-0813">Transport</keyword>
<keyword id="KW-0830">Ubiquinone</keyword>
<dbReference type="EC" id="7.1.1.-" evidence="1"/>
<dbReference type="EMBL" id="CP000887">
    <property type="protein sequence ID" value="ACD72300.1"/>
    <property type="molecule type" value="Genomic_DNA"/>
</dbReference>
<dbReference type="RefSeq" id="WP_002963947.1">
    <property type="nucleotide sequence ID" value="NC_010742.1"/>
</dbReference>
<dbReference type="SMR" id="B2S553"/>
<dbReference type="GeneID" id="97533881"/>
<dbReference type="KEGG" id="bmc:BAbS19_I07760"/>
<dbReference type="HOGENOM" id="CLU_144724_2_0_5"/>
<dbReference type="Proteomes" id="UP000002565">
    <property type="component" value="Chromosome 1"/>
</dbReference>
<dbReference type="GO" id="GO:0030964">
    <property type="term" value="C:NADH dehydrogenase complex"/>
    <property type="evidence" value="ECO:0007669"/>
    <property type="project" value="TreeGrafter"/>
</dbReference>
<dbReference type="GO" id="GO:0005886">
    <property type="term" value="C:plasma membrane"/>
    <property type="evidence" value="ECO:0007669"/>
    <property type="project" value="UniProtKB-SubCell"/>
</dbReference>
<dbReference type="GO" id="GO:0050136">
    <property type="term" value="F:NADH:ubiquinone reductase (non-electrogenic) activity"/>
    <property type="evidence" value="ECO:0007669"/>
    <property type="project" value="UniProtKB-UniRule"/>
</dbReference>
<dbReference type="GO" id="GO:0048038">
    <property type="term" value="F:quinone binding"/>
    <property type="evidence" value="ECO:0007669"/>
    <property type="project" value="UniProtKB-KW"/>
</dbReference>
<dbReference type="GO" id="GO:0042773">
    <property type="term" value="P:ATP synthesis coupled electron transport"/>
    <property type="evidence" value="ECO:0007669"/>
    <property type="project" value="InterPro"/>
</dbReference>
<dbReference type="FunFam" id="1.10.287.3510:FF:000001">
    <property type="entry name" value="NADH-quinone oxidoreductase subunit K"/>
    <property type="match status" value="1"/>
</dbReference>
<dbReference type="Gene3D" id="1.10.287.3510">
    <property type="match status" value="1"/>
</dbReference>
<dbReference type="HAMAP" id="MF_01456">
    <property type="entry name" value="NDH1_NuoK"/>
    <property type="match status" value="1"/>
</dbReference>
<dbReference type="InterPro" id="IPR001133">
    <property type="entry name" value="NADH_UbQ_OxRdtase_chain4L/K"/>
</dbReference>
<dbReference type="InterPro" id="IPR039428">
    <property type="entry name" value="NUOK/Mnh_C1-like"/>
</dbReference>
<dbReference type="NCBIfam" id="NF004320">
    <property type="entry name" value="PRK05715.1-2"/>
    <property type="match status" value="1"/>
</dbReference>
<dbReference type="NCBIfam" id="NF004321">
    <property type="entry name" value="PRK05715.1-3"/>
    <property type="match status" value="1"/>
</dbReference>
<dbReference type="NCBIfam" id="NF004323">
    <property type="entry name" value="PRK05715.1-5"/>
    <property type="match status" value="1"/>
</dbReference>
<dbReference type="PANTHER" id="PTHR11434:SF21">
    <property type="entry name" value="NADH DEHYDROGENASE SUBUNIT 4L-RELATED"/>
    <property type="match status" value="1"/>
</dbReference>
<dbReference type="PANTHER" id="PTHR11434">
    <property type="entry name" value="NADH-UBIQUINONE OXIDOREDUCTASE SUBUNIT ND4L"/>
    <property type="match status" value="1"/>
</dbReference>
<dbReference type="Pfam" id="PF00420">
    <property type="entry name" value="Oxidored_q2"/>
    <property type="match status" value="1"/>
</dbReference>